<reference key="1">
    <citation type="journal article" date="2000" name="Science">
        <title>The genome sequence of Drosophila melanogaster.</title>
        <authorList>
            <person name="Adams M.D."/>
            <person name="Celniker S.E."/>
            <person name="Holt R.A."/>
            <person name="Evans C.A."/>
            <person name="Gocayne J.D."/>
            <person name="Amanatides P.G."/>
            <person name="Scherer S.E."/>
            <person name="Li P.W."/>
            <person name="Hoskins R.A."/>
            <person name="Galle R.F."/>
            <person name="George R.A."/>
            <person name="Lewis S.E."/>
            <person name="Richards S."/>
            <person name="Ashburner M."/>
            <person name="Henderson S.N."/>
            <person name="Sutton G.G."/>
            <person name="Wortman J.R."/>
            <person name="Yandell M.D."/>
            <person name="Zhang Q."/>
            <person name="Chen L.X."/>
            <person name="Brandon R.C."/>
            <person name="Rogers Y.-H.C."/>
            <person name="Blazej R.G."/>
            <person name="Champe M."/>
            <person name="Pfeiffer B.D."/>
            <person name="Wan K.H."/>
            <person name="Doyle C."/>
            <person name="Baxter E.G."/>
            <person name="Helt G."/>
            <person name="Nelson C.R."/>
            <person name="Miklos G.L.G."/>
            <person name="Abril J.F."/>
            <person name="Agbayani A."/>
            <person name="An H.-J."/>
            <person name="Andrews-Pfannkoch C."/>
            <person name="Baldwin D."/>
            <person name="Ballew R.M."/>
            <person name="Basu A."/>
            <person name="Baxendale J."/>
            <person name="Bayraktaroglu L."/>
            <person name="Beasley E.M."/>
            <person name="Beeson K.Y."/>
            <person name="Benos P.V."/>
            <person name="Berman B.P."/>
            <person name="Bhandari D."/>
            <person name="Bolshakov S."/>
            <person name="Borkova D."/>
            <person name="Botchan M.R."/>
            <person name="Bouck J."/>
            <person name="Brokstein P."/>
            <person name="Brottier P."/>
            <person name="Burtis K.C."/>
            <person name="Busam D.A."/>
            <person name="Butler H."/>
            <person name="Cadieu E."/>
            <person name="Center A."/>
            <person name="Chandra I."/>
            <person name="Cherry J.M."/>
            <person name="Cawley S."/>
            <person name="Dahlke C."/>
            <person name="Davenport L.B."/>
            <person name="Davies P."/>
            <person name="de Pablos B."/>
            <person name="Delcher A."/>
            <person name="Deng Z."/>
            <person name="Mays A.D."/>
            <person name="Dew I."/>
            <person name="Dietz S.M."/>
            <person name="Dodson K."/>
            <person name="Doup L.E."/>
            <person name="Downes M."/>
            <person name="Dugan-Rocha S."/>
            <person name="Dunkov B.C."/>
            <person name="Dunn P."/>
            <person name="Durbin K.J."/>
            <person name="Evangelista C.C."/>
            <person name="Ferraz C."/>
            <person name="Ferriera S."/>
            <person name="Fleischmann W."/>
            <person name="Fosler C."/>
            <person name="Gabrielian A.E."/>
            <person name="Garg N.S."/>
            <person name="Gelbart W.M."/>
            <person name="Glasser K."/>
            <person name="Glodek A."/>
            <person name="Gong F."/>
            <person name="Gorrell J.H."/>
            <person name="Gu Z."/>
            <person name="Guan P."/>
            <person name="Harris M."/>
            <person name="Harris N.L."/>
            <person name="Harvey D.A."/>
            <person name="Heiman T.J."/>
            <person name="Hernandez J.R."/>
            <person name="Houck J."/>
            <person name="Hostin D."/>
            <person name="Houston K.A."/>
            <person name="Howland T.J."/>
            <person name="Wei M.-H."/>
            <person name="Ibegwam C."/>
            <person name="Jalali M."/>
            <person name="Kalush F."/>
            <person name="Karpen G.H."/>
            <person name="Ke Z."/>
            <person name="Kennison J.A."/>
            <person name="Ketchum K.A."/>
            <person name="Kimmel B.E."/>
            <person name="Kodira C.D."/>
            <person name="Kraft C.L."/>
            <person name="Kravitz S."/>
            <person name="Kulp D."/>
            <person name="Lai Z."/>
            <person name="Lasko P."/>
            <person name="Lei Y."/>
            <person name="Levitsky A.A."/>
            <person name="Li J.H."/>
            <person name="Li Z."/>
            <person name="Liang Y."/>
            <person name="Lin X."/>
            <person name="Liu X."/>
            <person name="Mattei B."/>
            <person name="McIntosh T.C."/>
            <person name="McLeod M.P."/>
            <person name="McPherson D."/>
            <person name="Merkulov G."/>
            <person name="Milshina N.V."/>
            <person name="Mobarry C."/>
            <person name="Morris J."/>
            <person name="Moshrefi A."/>
            <person name="Mount S.M."/>
            <person name="Moy M."/>
            <person name="Murphy B."/>
            <person name="Murphy L."/>
            <person name="Muzny D.M."/>
            <person name="Nelson D.L."/>
            <person name="Nelson D.R."/>
            <person name="Nelson K.A."/>
            <person name="Nixon K."/>
            <person name="Nusskern D.R."/>
            <person name="Pacleb J.M."/>
            <person name="Palazzolo M."/>
            <person name="Pittman G.S."/>
            <person name="Pan S."/>
            <person name="Pollard J."/>
            <person name="Puri V."/>
            <person name="Reese M.G."/>
            <person name="Reinert K."/>
            <person name="Remington K."/>
            <person name="Saunders R.D.C."/>
            <person name="Scheeler F."/>
            <person name="Shen H."/>
            <person name="Shue B.C."/>
            <person name="Siden-Kiamos I."/>
            <person name="Simpson M."/>
            <person name="Skupski M.P."/>
            <person name="Smith T.J."/>
            <person name="Spier E."/>
            <person name="Spradling A.C."/>
            <person name="Stapleton M."/>
            <person name="Strong R."/>
            <person name="Sun E."/>
            <person name="Svirskas R."/>
            <person name="Tector C."/>
            <person name="Turner R."/>
            <person name="Venter E."/>
            <person name="Wang A.H."/>
            <person name="Wang X."/>
            <person name="Wang Z.-Y."/>
            <person name="Wassarman D.A."/>
            <person name="Weinstock G.M."/>
            <person name="Weissenbach J."/>
            <person name="Williams S.M."/>
            <person name="Woodage T."/>
            <person name="Worley K.C."/>
            <person name="Wu D."/>
            <person name="Yang S."/>
            <person name="Yao Q.A."/>
            <person name="Ye J."/>
            <person name="Yeh R.-F."/>
            <person name="Zaveri J.S."/>
            <person name="Zhan M."/>
            <person name="Zhang G."/>
            <person name="Zhao Q."/>
            <person name="Zheng L."/>
            <person name="Zheng X.H."/>
            <person name="Zhong F.N."/>
            <person name="Zhong W."/>
            <person name="Zhou X."/>
            <person name="Zhu S.C."/>
            <person name="Zhu X."/>
            <person name="Smith H.O."/>
            <person name="Gibbs R.A."/>
            <person name="Myers E.W."/>
            <person name="Rubin G.M."/>
            <person name="Venter J.C."/>
        </authorList>
    </citation>
    <scope>NUCLEOTIDE SEQUENCE [LARGE SCALE GENOMIC DNA]</scope>
    <source>
        <strain>Berkeley</strain>
    </source>
</reference>
<reference key="2">
    <citation type="journal article" date="2002" name="Genome Biol.">
        <title>Annotation of the Drosophila melanogaster euchromatic genome: a systematic review.</title>
        <authorList>
            <person name="Misra S."/>
            <person name="Crosby M.A."/>
            <person name="Mungall C.J."/>
            <person name="Matthews B.B."/>
            <person name="Campbell K.S."/>
            <person name="Hradecky P."/>
            <person name="Huang Y."/>
            <person name="Kaminker J.S."/>
            <person name="Millburn G.H."/>
            <person name="Prochnik S.E."/>
            <person name="Smith C.D."/>
            <person name="Tupy J.L."/>
            <person name="Whitfield E.J."/>
            <person name="Bayraktaroglu L."/>
            <person name="Berman B.P."/>
            <person name="Bettencourt B.R."/>
            <person name="Celniker S.E."/>
            <person name="de Grey A.D.N.J."/>
            <person name="Drysdale R.A."/>
            <person name="Harris N.L."/>
            <person name="Richter J."/>
            <person name="Russo S."/>
            <person name="Schroeder A.J."/>
            <person name="Shu S.Q."/>
            <person name="Stapleton M."/>
            <person name="Yamada C."/>
            <person name="Ashburner M."/>
            <person name="Gelbart W.M."/>
            <person name="Rubin G.M."/>
            <person name="Lewis S.E."/>
        </authorList>
    </citation>
    <scope>GENOME REANNOTATION</scope>
    <source>
        <strain>Berkeley</strain>
    </source>
</reference>
<reference key="3">
    <citation type="journal article" date="2002" name="Genome Biol.">
        <title>A Drosophila full-length cDNA resource.</title>
        <authorList>
            <person name="Stapleton M."/>
            <person name="Carlson J.W."/>
            <person name="Brokstein P."/>
            <person name="Yu C."/>
            <person name="Champe M."/>
            <person name="George R.A."/>
            <person name="Guarin H."/>
            <person name="Kronmiller B."/>
            <person name="Pacleb J.M."/>
            <person name="Park S."/>
            <person name="Wan K.H."/>
            <person name="Rubin G.M."/>
            <person name="Celniker S.E."/>
        </authorList>
    </citation>
    <scope>NUCLEOTIDE SEQUENCE [LARGE SCALE MRNA] (ISOFORM 2)</scope>
    <source>
        <strain>Berkeley</strain>
        <tissue>Embryo</tissue>
    </source>
</reference>
<reference key="4">
    <citation type="submission" date="2004-05" db="EMBL/GenBank/DDBJ databases">
        <authorList>
            <person name="Stapleton M."/>
            <person name="Carlson J."/>
            <person name="Chavez C."/>
            <person name="Frise E."/>
            <person name="George R."/>
            <person name="Pacleb J."/>
            <person name="Park S."/>
            <person name="Wan K."/>
            <person name="Yu C."/>
            <person name="Rubin G.M."/>
            <person name="Celniker S."/>
        </authorList>
    </citation>
    <scope>NUCLEOTIDE SEQUENCE [LARGE SCALE MRNA] (ISOFORM 2)</scope>
    <source>
        <strain>Berkeley</strain>
        <tissue>Embryo</tissue>
    </source>
</reference>
<reference key="5">
    <citation type="journal article" date="2010" name="Curr. Biol.">
        <title>Ajuba LIM proteins are negative regulators of the Hippo signaling pathway.</title>
        <authorList>
            <person name="Das Thakur M."/>
            <person name="Feng Y."/>
            <person name="Jagannathan R."/>
            <person name="Seppa M.J."/>
            <person name="Skeath J.B."/>
            <person name="Longmore G.D."/>
        </authorList>
    </citation>
    <scope>FUNCTION</scope>
    <scope>SUBCELLULAR LOCATION</scope>
    <scope>INTERACTION WITH SAV AND WTS</scope>
</reference>
<gene>
    <name type="primary">jub</name>
    <name type="ORF">CG11063</name>
</gene>
<sequence>MTTQRTQTQARNPGNSDSDYETLMQRLHIGGGGGAGVGGGGGSGGPGDGGVAMRSYQRSPGAIENYLQESQQQQQQHQMQQMQQLHHNQDYKLYERGNIIAASKYATPRPVEQIQHTHNGSAQIYAPTAQILGQRIAPQKHSPVYENLEFYGQFDSNHKRAQPQSPGSRQSAILNGYLLMQPIRAGRFAHTPVPENQGSASLGTTRAAGGPPPPSGRSAALGPTGDLEEHAAPIYENIIPHSGQRAQPQASPATATMYQEMQPTSNSSGSSSTAGLDLNALLASPMHQRSISSNTASSSSLGSPTQRYRNLSLPSHLSPVPTAQSVAKLQQHTPVKSPGGAINVSVNPNYIEDINSSDYVCMTANLHRNTAAGLATGRAAATGAPAQRTVQEPPIITSSLAMGMATAAPPTTSNAPTSAAAAPAAPTSTASLRATPIAMTAPLAVATSPTPSQGSTAVNAALKPRRGLTKNLLPYSVTPPRPAGPTEAQRKIEELTRQLEEEIEQSEEHGEYFGICHTCGEKVKGAGQACQAMGNLYHTNCFICCSCGRALRGKAFYNVHGRVYCEEDYMYSGFQQTAEKCAICGHLIMEMILQAMGKSYHPGCFRCCVCNECLDGVPFTVDVDHKIYCVNDYHRMFAPKCASCGKGITPVEGTDETVRVVSMDKDFHVDCYICEECGMQLTDEPDKRCYPLDGRLLCRGCHLQRLALQSSPHARHQEPVCASYQYMG</sequence>
<evidence type="ECO:0000255" key="1">
    <source>
        <dbReference type="PROSITE-ProRule" id="PRU00125"/>
    </source>
</evidence>
<evidence type="ECO:0000256" key="2">
    <source>
        <dbReference type="SAM" id="MobiDB-lite"/>
    </source>
</evidence>
<evidence type="ECO:0000269" key="3">
    <source>
    </source>
</evidence>
<evidence type="ECO:0000303" key="4">
    <source>
    </source>
</evidence>
<evidence type="ECO:0000303" key="5">
    <source ref="4"/>
</evidence>
<evidence type="ECO:0000305" key="6"/>
<feature type="chain" id="PRO_0000416967" description="LIM domain-containing protein jub">
    <location>
        <begin position="1"/>
        <end position="728"/>
    </location>
</feature>
<feature type="domain" description="LIM zinc-binding 1" evidence="1">
    <location>
        <begin position="514"/>
        <end position="575"/>
    </location>
</feature>
<feature type="domain" description="LIM zinc-binding 2" evidence="1">
    <location>
        <begin position="579"/>
        <end position="639"/>
    </location>
</feature>
<feature type="domain" description="LIM zinc-binding 3" evidence="1">
    <location>
        <begin position="640"/>
        <end position="708"/>
    </location>
</feature>
<feature type="region of interest" description="Disordered" evidence="2">
    <location>
        <begin position="1"/>
        <end position="20"/>
    </location>
</feature>
<feature type="region of interest" description="Disordered" evidence="2">
    <location>
        <begin position="28"/>
        <end position="49"/>
    </location>
</feature>
<feature type="region of interest" description="Disordered" evidence="2">
    <location>
        <begin position="189"/>
        <end position="225"/>
    </location>
</feature>
<feature type="region of interest" description="Disordered" evidence="2">
    <location>
        <begin position="287"/>
        <end position="317"/>
    </location>
</feature>
<feature type="region of interest" description="Disordered" evidence="2">
    <location>
        <begin position="407"/>
        <end position="427"/>
    </location>
</feature>
<feature type="compositionally biased region" description="Polar residues" evidence="2">
    <location>
        <begin position="1"/>
        <end position="17"/>
    </location>
</feature>
<feature type="compositionally biased region" description="Gly residues" evidence="2">
    <location>
        <begin position="29"/>
        <end position="49"/>
    </location>
</feature>
<feature type="compositionally biased region" description="Low complexity" evidence="2">
    <location>
        <begin position="290"/>
        <end position="303"/>
    </location>
</feature>
<feature type="compositionally biased region" description="Polar residues" evidence="2">
    <location>
        <begin position="304"/>
        <end position="317"/>
    </location>
</feature>
<feature type="splice variant" id="VSP_043063" description="In isoform 2." evidence="4 5">
    <location>
        <begin position="1"/>
        <end position="532"/>
    </location>
</feature>
<accession>Q9VY77</accession>
<accession>Q8SZR9</accession>
<protein>
    <recommendedName>
        <fullName>LIM domain-containing protein jub</fullName>
    </recommendedName>
</protein>
<name>AJUBA_DROME</name>
<keyword id="KW-0025">Alternative splicing</keyword>
<keyword id="KW-0965">Cell junction</keyword>
<keyword id="KW-0440">LIM domain</keyword>
<keyword id="KW-0479">Metal-binding</keyword>
<keyword id="KW-1185">Reference proteome</keyword>
<keyword id="KW-0677">Repeat</keyword>
<keyword id="KW-0862">Zinc</keyword>
<comment type="function">
    <text evidence="3">Regulates organ size by inhibiting apoptosis and promoting cell proliferation by influencing the expression of G1/S-specific cyclin-E (CycE) and apoptosis 1 inhibitor (th). Negatively regulates the Hippo signaling pathway.</text>
</comment>
<comment type="subunit">
    <text evidence="3">Interacts with sav and wts.</text>
</comment>
<comment type="subcellular location">
    <subcellularLocation>
        <location evidence="3">Cell junction</location>
        <location evidence="3">Adherens junction</location>
    </subcellularLocation>
</comment>
<comment type="alternative products">
    <event type="alternative splicing"/>
    <isoform>
        <id>Q9VY77-1</id>
        <name>1</name>
        <sequence type="displayed"/>
    </isoform>
    <isoform>
        <id>Q9VY77-2</id>
        <name>2</name>
        <sequence type="described" ref="VSP_043063"/>
    </isoform>
</comment>
<comment type="similarity">
    <text evidence="6">Belongs to the zyxin/ajuba family.</text>
</comment>
<organism>
    <name type="scientific">Drosophila melanogaster</name>
    <name type="common">Fruit fly</name>
    <dbReference type="NCBI Taxonomy" id="7227"/>
    <lineage>
        <taxon>Eukaryota</taxon>
        <taxon>Metazoa</taxon>
        <taxon>Ecdysozoa</taxon>
        <taxon>Arthropoda</taxon>
        <taxon>Hexapoda</taxon>
        <taxon>Insecta</taxon>
        <taxon>Pterygota</taxon>
        <taxon>Neoptera</taxon>
        <taxon>Endopterygota</taxon>
        <taxon>Diptera</taxon>
        <taxon>Brachycera</taxon>
        <taxon>Muscomorpha</taxon>
        <taxon>Ephydroidea</taxon>
        <taxon>Drosophilidae</taxon>
        <taxon>Drosophila</taxon>
        <taxon>Sophophora</taxon>
    </lineage>
</organism>
<proteinExistence type="evidence at protein level"/>
<dbReference type="EMBL" id="AE014298">
    <property type="protein sequence ID" value="AAF48328.3"/>
    <property type="molecule type" value="Genomic_DNA"/>
</dbReference>
<dbReference type="EMBL" id="AY070556">
    <property type="protein sequence ID" value="AAL48027.1"/>
    <property type="molecule type" value="mRNA"/>
</dbReference>
<dbReference type="EMBL" id="BT014658">
    <property type="protein sequence ID" value="AAT27282.1"/>
    <property type="molecule type" value="mRNA"/>
</dbReference>
<dbReference type="RefSeq" id="NP_572930.3">
    <molecule id="Q9VY77-1"/>
    <property type="nucleotide sequence ID" value="NM_132702.5"/>
</dbReference>
<dbReference type="BioGRID" id="58722">
    <property type="interactions" value="17"/>
</dbReference>
<dbReference type="FunCoup" id="Q9VY77">
    <property type="interactions" value="89"/>
</dbReference>
<dbReference type="IntAct" id="Q9VY77">
    <property type="interactions" value="1"/>
</dbReference>
<dbReference type="STRING" id="7227.FBpp0073665"/>
<dbReference type="GlyGen" id="Q9VY77">
    <property type="glycosylation" value="3 sites"/>
</dbReference>
<dbReference type="PaxDb" id="7227-FBpp0073665"/>
<dbReference type="EnsemblMetazoa" id="FBtr0073834">
    <molecule id="Q9VY77-1"/>
    <property type="protein sequence ID" value="FBpp0073665"/>
    <property type="gene ID" value="FBgn0030530"/>
</dbReference>
<dbReference type="GeneID" id="32351"/>
<dbReference type="KEGG" id="dme:Dmel_CG11063"/>
<dbReference type="UCSC" id="CG11063-RB">
    <molecule id="Q9VY77-1"/>
    <property type="organism name" value="d. melanogaster"/>
</dbReference>
<dbReference type="AGR" id="FB:FBgn0030530"/>
<dbReference type="CTD" id="32351"/>
<dbReference type="FlyBase" id="FBgn0030530">
    <property type="gene designation" value="jub"/>
</dbReference>
<dbReference type="VEuPathDB" id="VectorBase:FBgn0030530"/>
<dbReference type="eggNOG" id="KOG1701">
    <property type="taxonomic scope" value="Eukaryota"/>
</dbReference>
<dbReference type="InParanoid" id="Q9VY77"/>
<dbReference type="OMA" id="AHIYAPT"/>
<dbReference type="OrthoDB" id="25414at2759"/>
<dbReference type="PhylomeDB" id="Q9VY77"/>
<dbReference type="Reactome" id="R-DME-1234176">
    <property type="pathway name" value="Oxygen-dependent proline hydroxylation of Hypoxia-inducible Factor Alpha"/>
</dbReference>
<dbReference type="Reactome" id="R-DME-9841922">
    <property type="pathway name" value="MLL4 and MLL3 complexes regulate expression of PPARG target genes in adipogenesis and hepatic steatosis"/>
</dbReference>
<dbReference type="SignaLink" id="Q9VY77"/>
<dbReference type="BioGRID-ORCS" id="32351">
    <property type="hits" value="0 hits in 3 CRISPR screens"/>
</dbReference>
<dbReference type="CD-CODE" id="2838EF58">
    <property type="entry name" value="Centrosome"/>
</dbReference>
<dbReference type="GenomeRNAi" id="32351"/>
<dbReference type="PRO" id="PR:Q9VY77"/>
<dbReference type="Proteomes" id="UP000000803">
    <property type="component" value="Chromosome X"/>
</dbReference>
<dbReference type="Bgee" id="FBgn0030530">
    <property type="expression patterns" value="Expressed in adult differentiating enterocyte in digestive tract and 79 other cell types or tissues"/>
</dbReference>
<dbReference type="ExpressionAtlas" id="Q9VY77">
    <property type="expression patterns" value="baseline and differential"/>
</dbReference>
<dbReference type="GO" id="GO:0005912">
    <property type="term" value="C:adherens junction"/>
    <property type="evidence" value="ECO:0000314"/>
    <property type="project" value="FlyBase"/>
</dbReference>
<dbReference type="GO" id="GO:0045179">
    <property type="term" value="C:apical cortex"/>
    <property type="evidence" value="ECO:0000314"/>
    <property type="project" value="FlyBase"/>
</dbReference>
<dbReference type="GO" id="GO:0005634">
    <property type="term" value="C:nucleus"/>
    <property type="evidence" value="ECO:0000318"/>
    <property type="project" value="GO_Central"/>
</dbReference>
<dbReference type="GO" id="GO:0000932">
    <property type="term" value="C:P-body"/>
    <property type="evidence" value="ECO:0000318"/>
    <property type="project" value="GO_Central"/>
</dbReference>
<dbReference type="GO" id="GO:0005667">
    <property type="term" value="C:transcription regulator complex"/>
    <property type="evidence" value="ECO:0000318"/>
    <property type="project" value="GO_Central"/>
</dbReference>
<dbReference type="GO" id="GO:0046872">
    <property type="term" value="F:metal ion binding"/>
    <property type="evidence" value="ECO:0007669"/>
    <property type="project" value="UniProtKB-KW"/>
</dbReference>
<dbReference type="GO" id="GO:0140311">
    <property type="term" value="F:protein sequestering activity"/>
    <property type="evidence" value="ECO:0000353"/>
    <property type="project" value="FlyBase"/>
</dbReference>
<dbReference type="GO" id="GO:0003714">
    <property type="term" value="F:transcription corepressor activity"/>
    <property type="evidence" value="ECO:0000318"/>
    <property type="project" value="GO_Central"/>
</dbReference>
<dbReference type="GO" id="GO:0007010">
    <property type="term" value="P:cytoskeleton organization"/>
    <property type="evidence" value="ECO:0000318"/>
    <property type="project" value="GO_Central"/>
</dbReference>
<dbReference type="GO" id="GO:0030707">
    <property type="term" value="P:follicle cell of egg chamber development"/>
    <property type="evidence" value="ECO:0000315"/>
    <property type="project" value="FlyBase"/>
</dbReference>
<dbReference type="GO" id="GO:0000278">
    <property type="term" value="P:mitotic cell cycle"/>
    <property type="evidence" value="ECO:0000315"/>
    <property type="project" value="FlyBase"/>
</dbReference>
<dbReference type="GO" id="GO:0035331">
    <property type="term" value="P:negative regulation of hippo signaling"/>
    <property type="evidence" value="ECO:0000315"/>
    <property type="project" value="FlyBase"/>
</dbReference>
<dbReference type="GO" id="GO:0045572">
    <property type="term" value="P:positive regulation of imaginal disc growth"/>
    <property type="evidence" value="ECO:0000315"/>
    <property type="project" value="FlyBase"/>
</dbReference>
<dbReference type="GO" id="GO:0071539">
    <property type="term" value="P:protein localization to centrosome"/>
    <property type="evidence" value="ECO:0000315"/>
    <property type="project" value="FlyBase"/>
</dbReference>
<dbReference type="GO" id="GO:0006355">
    <property type="term" value="P:regulation of DNA-templated transcription"/>
    <property type="evidence" value="ECO:0000318"/>
    <property type="project" value="GO_Central"/>
</dbReference>
<dbReference type="GO" id="GO:0001666">
    <property type="term" value="P:response to hypoxia"/>
    <property type="evidence" value="ECO:0000318"/>
    <property type="project" value="GO_Central"/>
</dbReference>
<dbReference type="CDD" id="cd09352">
    <property type="entry name" value="LIM1_Ajuba_like"/>
    <property type="match status" value="1"/>
</dbReference>
<dbReference type="CDD" id="cd09355">
    <property type="entry name" value="LIM2_Ajuba_like"/>
    <property type="match status" value="1"/>
</dbReference>
<dbReference type="CDD" id="cd09438">
    <property type="entry name" value="LIM3_Ajuba_like"/>
    <property type="match status" value="1"/>
</dbReference>
<dbReference type="FunFam" id="2.10.110.10:FF:000028">
    <property type="entry name" value="LIM domain-containing protein 1"/>
    <property type="match status" value="1"/>
</dbReference>
<dbReference type="FunFam" id="2.10.110.10:FF:000036">
    <property type="entry name" value="LIM domain-containing protein 1"/>
    <property type="match status" value="1"/>
</dbReference>
<dbReference type="FunFam" id="2.10.110.10:FF:000037">
    <property type="entry name" value="LIM domain-containing protein 1"/>
    <property type="match status" value="1"/>
</dbReference>
<dbReference type="Gene3D" id="2.10.110.10">
    <property type="entry name" value="Cysteine Rich Protein"/>
    <property type="match status" value="3"/>
</dbReference>
<dbReference type="InterPro" id="IPR047172">
    <property type="entry name" value="Ajuba-like"/>
</dbReference>
<dbReference type="InterPro" id="IPR047245">
    <property type="entry name" value="Ajuba-like_LIM1"/>
</dbReference>
<dbReference type="InterPro" id="IPR047247">
    <property type="entry name" value="Ajuba-like_LIM2"/>
</dbReference>
<dbReference type="InterPro" id="IPR047248">
    <property type="entry name" value="Ajuba-like_LIM3"/>
</dbReference>
<dbReference type="InterPro" id="IPR001781">
    <property type="entry name" value="Znf_LIM"/>
</dbReference>
<dbReference type="PANTHER" id="PTHR24219">
    <property type="entry name" value="LIM DOMAIN-CONTAINING PROTEIN JUB"/>
    <property type="match status" value="1"/>
</dbReference>
<dbReference type="PANTHER" id="PTHR24219:SF4">
    <property type="entry name" value="LIM DOMAIN-CONTAINING PROTEIN JUB"/>
    <property type="match status" value="1"/>
</dbReference>
<dbReference type="Pfam" id="PF00412">
    <property type="entry name" value="LIM"/>
    <property type="match status" value="3"/>
</dbReference>
<dbReference type="SMART" id="SM00132">
    <property type="entry name" value="LIM"/>
    <property type="match status" value="3"/>
</dbReference>
<dbReference type="SUPFAM" id="SSF57716">
    <property type="entry name" value="Glucocorticoid receptor-like (DNA-binding domain)"/>
    <property type="match status" value="3"/>
</dbReference>
<dbReference type="PROSITE" id="PS00478">
    <property type="entry name" value="LIM_DOMAIN_1"/>
    <property type="match status" value="2"/>
</dbReference>
<dbReference type="PROSITE" id="PS50023">
    <property type="entry name" value="LIM_DOMAIN_2"/>
    <property type="match status" value="3"/>
</dbReference>